<gene>
    <name type="primary">Bmp2</name>
    <name type="synonym">Bmp-2</name>
</gene>
<keyword id="KW-0891">Chondrogenesis</keyword>
<keyword id="KW-0165">Cleavage on pair of basic residues</keyword>
<keyword id="KW-0202">Cytokine</keyword>
<keyword id="KW-0217">Developmental protein</keyword>
<keyword id="KW-0221">Differentiation</keyword>
<keyword id="KW-1015">Disulfide bond</keyword>
<keyword id="KW-0325">Glycoprotein</keyword>
<keyword id="KW-0339">Growth factor</keyword>
<keyword id="KW-0892">Osteogenesis</keyword>
<keyword id="KW-0597">Phosphoprotein</keyword>
<keyword id="KW-1185">Reference proteome</keyword>
<keyword id="KW-0964">Secreted</keyword>
<keyword id="KW-0732">Signal</keyword>
<proteinExistence type="evidence at transcript level"/>
<feature type="signal peptide" evidence="5">
    <location>
        <begin position="1"/>
        <end position="19"/>
    </location>
</feature>
<feature type="propeptide" id="PRO_0000033830" description="Cleaved by PCSK5" evidence="7">
    <location>
        <begin position="20"/>
        <end position="279"/>
    </location>
</feature>
<feature type="chain" id="PRO_0000033831" description="Bone morphogenetic protein 2">
    <location>
        <begin position="280"/>
        <end position="393"/>
    </location>
</feature>
<feature type="region of interest" description="Disordered" evidence="6">
    <location>
        <begin position="268"/>
        <end position="290"/>
    </location>
</feature>
<feature type="compositionally biased region" description="Basic residues" evidence="6">
    <location>
        <begin position="271"/>
        <end position="290"/>
    </location>
</feature>
<feature type="modified residue" description="Phosphoserine" evidence="3">
    <location>
        <position position="85"/>
    </location>
</feature>
<feature type="glycosylation site" description="N-linked (GlcNAc...) asparagine" evidence="5">
    <location>
        <position position="133"/>
    </location>
</feature>
<feature type="glycosylation site" description="N-linked (GlcNAc...) asparagine" evidence="5">
    <location>
        <position position="161"/>
    </location>
</feature>
<feature type="glycosylation site" description="N-linked (GlcNAc...) asparagine" evidence="5">
    <location>
        <position position="197"/>
    </location>
</feature>
<feature type="glycosylation site" description="N-linked (GlcNAc...) asparagine" evidence="5">
    <location>
        <position position="335"/>
    </location>
</feature>
<feature type="disulfide bond" evidence="1">
    <location>
        <begin position="293"/>
        <end position="358"/>
    </location>
</feature>
<feature type="disulfide bond" evidence="1">
    <location>
        <begin position="322"/>
        <end position="390"/>
    </location>
</feature>
<feature type="disulfide bond" evidence="1">
    <location>
        <begin position="326"/>
        <end position="392"/>
    </location>
</feature>
<feature type="disulfide bond" description="Interchain" evidence="1">
    <location>
        <position position="357"/>
    </location>
</feature>
<name>BMP2_RAT</name>
<organism>
    <name type="scientific">Rattus norvegicus</name>
    <name type="common">Rat</name>
    <dbReference type="NCBI Taxonomy" id="10116"/>
    <lineage>
        <taxon>Eukaryota</taxon>
        <taxon>Metazoa</taxon>
        <taxon>Chordata</taxon>
        <taxon>Craniata</taxon>
        <taxon>Vertebrata</taxon>
        <taxon>Euteleostomi</taxon>
        <taxon>Mammalia</taxon>
        <taxon>Eutheria</taxon>
        <taxon>Euarchontoglires</taxon>
        <taxon>Glires</taxon>
        <taxon>Rodentia</taxon>
        <taxon>Myomorpha</taxon>
        <taxon>Muroidea</taxon>
        <taxon>Muridae</taxon>
        <taxon>Murinae</taxon>
        <taxon>Rattus</taxon>
    </lineage>
</organism>
<dbReference type="EMBL" id="Z25868">
    <property type="protein sequence ID" value="CAA81088.1"/>
    <property type="molecule type" value="mRNA"/>
</dbReference>
<dbReference type="PIR" id="S37073">
    <property type="entry name" value="S37073"/>
</dbReference>
<dbReference type="RefSeq" id="NP_058874.1">
    <property type="nucleotide sequence ID" value="NM_017178.1"/>
</dbReference>
<dbReference type="SMR" id="P49001"/>
<dbReference type="FunCoup" id="P49001">
    <property type="interactions" value="347"/>
</dbReference>
<dbReference type="STRING" id="10116.ENSRNOP00000028904"/>
<dbReference type="GlyCosmos" id="P49001">
    <property type="glycosylation" value="4 sites, No reported glycans"/>
</dbReference>
<dbReference type="GlyGen" id="P49001">
    <property type="glycosylation" value="5 sites"/>
</dbReference>
<dbReference type="PhosphoSitePlus" id="P49001"/>
<dbReference type="jPOST" id="P49001"/>
<dbReference type="PaxDb" id="10116-ENSRNOP00000028904"/>
<dbReference type="GeneID" id="29373"/>
<dbReference type="KEGG" id="rno:29373"/>
<dbReference type="UCSC" id="RGD:2211">
    <property type="organism name" value="rat"/>
</dbReference>
<dbReference type="AGR" id="RGD:2211"/>
<dbReference type="CTD" id="650"/>
<dbReference type="RGD" id="2211">
    <property type="gene designation" value="Bmp2"/>
</dbReference>
<dbReference type="eggNOG" id="KOG3900">
    <property type="taxonomic scope" value="Eukaryota"/>
</dbReference>
<dbReference type="InParanoid" id="P49001"/>
<dbReference type="PhylomeDB" id="P49001"/>
<dbReference type="Reactome" id="R-RNO-201451">
    <property type="pathway name" value="Signaling by BMP"/>
</dbReference>
<dbReference type="Reactome" id="R-RNO-2129379">
    <property type="pathway name" value="Molecules associated with elastic fibres"/>
</dbReference>
<dbReference type="PRO" id="PR:P49001"/>
<dbReference type="Proteomes" id="UP000002494">
    <property type="component" value="Unplaced"/>
</dbReference>
<dbReference type="GO" id="GO:0070724">
    <property type="term" value="C:BMP receptor complex"/>
    <property type="evidence" value="ECO:0000266"/>
    <property type="project" value="RGD"/>
</dbReference>
<dbReference type="GO" id="GO:0009986">
    <property type="term" value="C:cell surface"/>
    <property type="evidence" value="ECO:0000266"/>
    <property type="project" value="RGD"/>
</dbReference>
<dbReference type="GO" id="GO:0150005">
    <property type="term" value="C:enzyme activator complex"/>
    <property type="evidence" value="ECO:0000266"/>
    <property type="project" value="RGD"/>
</dbReference>
<dbReference type="GO" id="GO:0005576">
    <property type="term" value="C:extracellular region"/>
    <property type="evidence" value="ECO:0000266"/>
    <property type="project" value="RGD"/>
</dbReference>
<dbReference type="GO" id="GO:0005615">
    <property type="term" value="C:extracellular space"/>
    <property type="evidence" value="ECO:0000314"/>
    <property type="project" value="RGD"/>
</dbReference>
<dbReference type="GO" id="GO:0005886">
    <property type="term" value="C:plasma membrane"/>
    <property type="evidence" value="ECO:0000266"/>
    <property type="project" value="RGD"/>
</dbReference>
<dbReference type="GO" id="GO:0032991">
    <property type="term" value="C:protein-containing complex"/>
    <property type="evidence" value="ECO:0000314"/>
    <property type="project" value="RGD"/>
</dbReference>
<dbReference type="GO" id="GO:0031982">
    <property type="term" value="C:vesicle"/>
    <property type="evidence" value="ECO:0000314"/>
    <property type="project" value="RGD"/>
</dbReference>
<dbReference type="GO" id="GO:0070700">
    <property type="term" value="F:BMP receptor binding"/>
    <property type="evidence" value="ECO:0000266"/>
    <property type="project" value="RGD"/>
</dbReference>
<dbReference type="GO" id="GO:0039706">
    <property type="term" value="F:co-receptor binding"/>
    <property type="evidence" value="ECO:0000266"/>
    <property type="project" value="RGD"/>
</dbReference>
<dbReference type="GO" id="GO:0005125">
    <property type="term" value="F:cytokine activity"/>
    <property type="evidence" value="ECO:0000266"/>
    <property type="project" value="RGD"/>
</dbReference>
<dbReference type="GO" id="GO:0008083">
    <property type="term" value="F:growth factor activity"/>
    <property type="evidence" value="ECO:0000314"/>
    <property type="project" value="RGD"/>
</dbReference>
<dbReference type="GO" id="GO:0042802">
    <property type="term" value="F:identical protein binding"/>
    <property type="evidence" value="ECO:0000353"/>
    <property type="project" value="RGD"/>
</dbReference>
<dbReference type="GO" id="GO:0019211">
    <property type="term" value="F:phosphatase activator activity"/>
    <property type="evidence" value="ECO:0000266"/>
    <property type="project" value="RGD"/>
</dbReference>
<dbReference type="GO" id="GO:0019904">
    <property type="term" value="F:protein domain specific binding"/>
    <property type="evidence" value="ECO:0000353"/>
    <property type="project" value="RGD"/>
</dbReference>
<dbReference type="GO" id="GO:0043539">
    <property type="term" value="F:protein serine/threonine kinase activator activity"/>
    <property type="evidence" value="ECO:0000266"/>
    <property type="project" value="RGD"/>
</dbReference>
<dbReference type="GO" id="GO:0048018">
    <property type="term" value="F:receptor ligand activity"/>
    <property type="evidence" value="ECO:0000266"/>
    <property type="project" value="RGD"/>
</dbReference>
<dbReference type="GO" id="GO:0036305">
    <property type="term" value="P:ameloblast differentiation"/>
    <property type="evidence" value="ECO:0000266"/>
    <property type="project" value="RGD"/>
</dbReference>
<dbReference type="GO" id="GO:0009887">
    <property type="term" value="P:animal organ morphogenesis"/>
    <property type="evidence" value="ECO:0000266"/>
    <property type="project" value="RGD"/>
</dbReference>
<dbReference type="GO" id="GO:0003176">
    <property type="term" value="P:aortic valve development"/>
    <property type="evidence" value="ECO:0000266"/>
    <property type="project" value="RGD"/>
</dbReference>
<dbReference type="GO" id="GO:0048708">
    <property type="term" value="P:astrocyte differentiation"/>
    <property type="evidence" value="ECO:0000266"/>
    <property type="project" value="RGD"/>
</dbReference>
<dbReference type="GO" id="GO:1905222">
    <property type="term" value="P:atrioventricular canal morphogenesis"/>
    <property type="evidence" value="ECO:0000266"/>
    <property type="project" value="RGD"/>
</dbReference>
<dbReference type="GO" id="GO:0003181">
    <property type="term" value="P:atrioventricular valve morphogenesis"/>
    <property type="evidence" value="ECO:0000266"/>
    <property type="project" value="RGD"/>
</dbReference>
<dbReference type="GO" id="GO:0030509">
    <property type="term" value="P:BMP signaling pathway"/>
    <property type="evidence" value="ECO:0000314"/>
    <property type="project" value="RGD"/>
</dbReference>
<dbReference type="GO" id="GO:0060348">
    <property type="term" value="P:bone development"/>
    <property type="evidence" value="ECO:0000266"/>
    <property type="project" value="RGD"/>
</dbReference>
<dbReference type="GO" id="GO:0030282">
    <property type="term" value="P:bone mineralization"/>
    <property type="evidence" value="ECO:0000266"/>
    <property type="project" value="RGD"/>
</dbReference>
<dbReference type="GO" id="GO:0001658">
    <property type="term" value="P:branching involved in ureteric bud morphogenesis"/>
    <property type="evidence" value="ECO:0000266"/>
    <property type="project" value="RGD"/>
</dbReference>
<dbReference type="GO" id="GO:0003210">
    <property type="term" value="P:cardiac atrium formation"/>
    <property type="evidence" value="ECO:0000266"/>
    <property type="project" value="RGD"/>
</dbReference>
<dbReference type="GO" id="GO:0060317">
    <property type="term" value="P:cardiac epithelial to mesenchymal transition"/>
    <property type="evidence" value="ECO:0000266"/>
    <property type="project" value="RGD"/>
</dbReference>
<dbReference type="GO" id="GO:1905072">
    <property type="term" value="P:cardiac jelly development"/>
    <property type="evidence" value="ECO:0000266"/>
    <property type="project" value="RGD"/>
</dbReference>
<dbReference type="GO" id="GO:0055007">
    <property type="term" value="P:cardiac muscle cell differentiation"/>
    <property type="evidence" value="ECO:0000266"/>
    <property type="project" value="RGD"/>
</dbReference>
<dbReference type="GO" id="GO:0014898">
    <property type="term" value="P:cardiac muscle hypertrophy in response to stress"/>
    <property type="evidence" value="ECO:0000315"/>
    <property type="project" value="RGD"/>
</dbReference>
<dbReference type="GO" id="GO:0055008">
    <property type="term" value="P:cardiac muscle tissue morphogenesis"/>
    <property type="evidence" value="ECO:0000266"/>
    <property type="project" value="RGD"/>
</dbReference>
<dbReference type="GO" id="GO:0035051">
    <property type="term" value="P:cardiocyte differentiation"/>
    <property type="evidence" value="ECO:0000266"/>
    <property type="project" value="RGD"/>
</dbReference>
<dbReference type="GO" id="GO:0045165">
    <property type="term" value="P:cell fate commitment"/>
    <property type="evidence" value="ECO:0000266"/>
    <property type="project" value="RGD"/>
</dbReference>
<dbReference type="GO" id="GO:0071773">
    <property type="term" value="P:cellular response to BMP stimulus"/>
    <property type="evidence" value="ECO:0000270"/>
    <property type="project" value="RGD"/>
</dbReference>
<dbReference type="GO" id="GO:0071363">
    <property type="term" value="P:cellular response to growth factor stimulus"/>
    <property type="evidence" value="ECO:0000266"/>
    <property type="project" value="RGD"/>
</dbReference>
<dbReference type="GO" id="GO:0071260">
    <property type="term" value="P:cellular response to mechanical stimulus"/>
    <property type="evidence" value="ECO:0000270"/>
    <property type="project" value="RGD"/>
</dbReference>
<dbReference type="GO" id="GO:0002062">
    <property type="term" value="P:chondrocyte differentiation"/>
    <property type="evidence" value="ECO:0000266"/>
    <property type="project" value="RGD"/>
</dbReference>
<dbReference type="GO" id="GO:0060128">
    <property type="term" value="P:corticotropin hormone secreting cell differentiation"/>
    <property type="evidence" value="ECO:0000266"/>
    <property type="project" value="RGD"/>
</dbReference>
<dbReference type="GO" id="GO:0035054">
    <property type="term" value="P:embryonic heart tube anterior/posterior pattern specification"/>
    <property type="evidence" value="ECO:0000266"/>
    <property type="project" value="RGD"/>
</dbReference>
<dbReference type="GO" id="GO:0003272">
    <property type="term" value="P:endocardial cushion formation"/>
    <property type="evidence" value="ECO:0000266"/>
    <property type="project" value="RGD"/>
</dbReference>
<dbReference type="GO" id="GO:0003203">
    <property type="term" value="P:endocardial cushion morphogenesis"/>
    <property type="evidence" value="ECO:0000266"/>
    <property type="project" value="RGD"/>
</dbReference>
<dbReference type="GO" id="GO:0003133">
    <property type="term" value="P:endodermal-mesodermal cell signaling"/>
    <property type="evidence" value="ECO:0000266"/>
    <property type="project" value="RGD"/>
</dbReference>
<dbReference type="GO" id="GO:0001837">
    <property type="term" value="P:epithelial to mesenchymal transition"/>
    <property type="evidence" value="ECO:0000266"/>
    <property type="project" value="RGD"/>
</dbReference>
<dbReference type="GO" id="GO:0010467">
    <property type="term" value="P:gene expression"/>
    <property type="evidence" value="ECO:0000266"/>
    <property type="project" value="RGD"/>
</dbReference>
<dbReference type="GO" id="GO:0007507">
    <property type="term" value="P:heart development"/>
    <property type="evidence" value="ECO:0000266"/>
    <property type="project" value="RGD"/>
</dbReference>
<dbReference type="GO" id="GO:0003129">
    <property type="term" value="P:heart induction"/>
    <property type="evidence" value="ECO:0000266"/>
    <property type="project" value="RGD"/>
</dbReference>
<dbReference type="GO" id="GO:0001701">
    <property type="term" value="P:in utero embryonic development"/>
    <property type="evidence" value="ECO:0000266"/>
    <property type="project" value="RGD"/>
</dbReference>
<dbReference type="GO" id="GO:0006954">
    <property type="term" value="P:inflammatory response"/>
    <property type="evidence" value="ECO:0000266"/>
    <property type="project" value="RGD"/>
</dbReference>
<dbReference type="GO" id="GO:0048839">
    <property type="term" value="P:inner ear development"/>
    <property type="evidence" value="ECO:0000266"/>
    <property type="project" value="RGD"/>
</dbReference>
<dbReference type="GO" id="GO:0060426">
    <property type="term" value="P:lung vasculature development"/>
    <property type="evidence" value="ECO:0000266"/>
    <property type="project" value="RGD"/>
</dbReference>
<dbReference type="GO" id="GO:0048762">
    <property type="term" value="P:mesenchymal cell differentiation"/>
    <property type="evidence" value="ECO:0000250"/>
    <property type="project" value="UniProtKB"/>
</dbReference>
<dbReference type="GO" id="GO:0072138">
    <property type="term" value="P:mesenchymal cell proliferation involved in ureteric bud development"/>
    <property type="evidence" value="ECO:0000266"/>
    <property type="project" value="RGD"/>
</dbReference>
<dbReference type="GO" id="GO:0060485">
    <property type="term" value="P:mesenchyme development"/>
    <property type="evidence" value="ECO:0000266"/>
    <property type="project" value="RGD"/>
</dbReference>
<dbReference type="GO" id="GO:0032348">
    <property type="term" value="P:negative regulation of aldosterone biosynthetic process"/>
    <property type="evidence" value="ECO:0000266"/>
    <property type="project" value="RGD"/>
</dbReference>
<dbReference type="GO" id="GO:0051042">
    <property type="term" value="P:negative regulation of calcium-independent cell-cell adhesion"/>
    <property type="evidence" value="ECO:0000266"/>
    <property type="project" value="RGD"/>
</dbReference>
<dbReference type="GO" id="GO:0090090">
    <property type="term" value="P:negative regulation of canonical Wnt signaling pathway"/>
    <property type="evidence" value="ECO:0000266"/>
    <property type="project" value="RGD"/>
</dbReference>
<dbReference type="GO" id="GO:2000726">
    <property type="term" value="P:negative regulation of cardiac muscle cell differentiation"/>
    <property type="evidence" value="ECO:0000266"/>
    <property type="project" value="RGD"/>
</dbReference>
<dbReference type="GO" id="GO:0045786">
    <property type="term" value="P:negative regulation of cell cycle"/>
    <property type="evidence" value="ECO:0000266"/>
    <property type="project" value="RGD"/>
</dbReference>
<dbReference type="GO" id="GO:0008285">
    <property type="term" value="P:negative regulation of cell population proliferation"/>
    <property type="evidence" value="ECO:0000266"/>
    <property type="project" value="RGD"/>
</dbReference>
<dbReference type="GO" id="GO:2000065">
    <property type="term" value="P:negative regulation of cortisol biosynthetic process"/>
    <property type="evidence" value="ECO:0000266"/>
    <property type="project" value="RGD"/>
</dbReference>
<dbReference type="GO" id="GO:0045892">
    <property type="term" value="P:negative regulation of DNA-templated transcription"/>
    <property type="evidence" value="ECO:0000266"/>
    <property type="project" value="RGD"/>
</dbReference>
<dbReference type="GO" id="GO:0045599">
    <property type="term" value="P:negative regulation of fat cell differentiation"/>
    <property type="evidence" value="ECO:0000266"/>
    <property type="project" value="RGD"/>
</dbReference>
<dbReference type="GO" id="GO:0010629">
    <property type="term" value="P:negative regulation of gene expression"/>
    <property type="evidence" value="ECO:0000266"/>
    <property type="project" value="RGD"/>
</dbReference>
<dbReference type="GO" id="GO:0043569">
    <property type="term" value="P:negative regulation of insulin-like growth factor receptor signaling pathway"/>
    <property type="evidence" value="ECO:0000266"/>
    <property type="project" value="RGD"/>
</dbReference>
<dbReference type="GO" id="GO:0051148">
    <property type="term" value="P:negative regulation of muscle cell differentiation"/>
    <property type="evidence" value="ECO:0000266"/>
    <property type="project" value="RGD"/>
</dbReference>
<dbReference type="GO" id="GO:0048662">
    <property type="term" value="P:negative regulation of smooth muscle cell proliferation"/>
    <property type="evidence" value="ECO:0000266"/>
    <property type="project" value="RGD"/>
</dbReference>
<dbReference type="GO" id="GO:0010894">
    <property type="term" value="P:negative regulation of steroid biosynthetic process"/>
    <property type="evidence" value="ECO:0000266"/>
    <property type="project" value="RGD"/>
</dbReference>
<dbReference type="GO" id="GO:0000122">
    <property type="term" value="P:negative regulation of transcription by RNA polymerase II"/>
    <property type="evidence" value="ECO:0000266"/>
    <property type="project" value="RGD"/>
</dbReference>
<dbReference type="GO" id="GO:0030512">
    <property type="term" value="P:negative regulation of transforming growth factor beta receptor signaling pathway"/>
    <property type="evidence" value="ECO:0000266"/>
    <property type="project" value="RGD"/>
</dbReference>
<dbReference type="GO" id="GO:0007219">
    <property type="term" value="P:Notch signaling pathway"/>
    <property type="evidence" value="ECO:0000266"/>
    <property type="project" value="RGD"/>
</dbReference>
<dbReference type="GO" id="GO:0042475">
    <property type="term" value="P:odontogenesis of dentin-containing tooth"/>
    <property type="evidence" value="ECO:0000266"/>
    <property type="project" value="RGD"/>
</dbReference>
<dbReference type="GO" id="GO:0001649">
    <property type="term" value="P:osteoblast differentiation"/>
    <property type="evidence" value="ECO:0000266"/>
    <property type="project" value="RGD"/>
</dbReference>
<dbReference type="GO" id="GO:0030316">
    <property type="term" value="P:osteoclast differentiation"/>
    <property type="evidence" value="ECO:0000266"/>
    <property type="project" value="RGD"/>
</dbReference>
<dbReference type="GO" id="GO:0042698">
    <property type="term" value="P:ovulation cycle"/>
    <property type="evidence" value="ECO:0000270"/>
    <property type="project" value="RGD"/>
</dbReference>
<dbReference type="GO" id="GO:0060039">
    <property type="term" value="P:pericardium development"/>
    <property type="evidence" value="ECO:0000266"/>
    <property type="project" value="RGD"/>
</dbReference>
<dbReference type="GO" id="GO:0043065">
    <property type="term" value="P:positive regulation of apoptotic process"/>
    <property type="evidence" value="ECO:0000266"/>
    <property type="project" value="RGD"/>
</dbReference>
<dbReference type="GO" id="GO:0048711">
    <property type="term" value="P:positive regulation of astrocyte differentiation"/>
    <property type="evidence" value="ECO:0000266"/>
    <property type="project" value="RGD"/>
</dbReference>
<dbReference type="GO" id="GO:0030501">
    <property type="term" value="P:positive regulation of bone mineralization"/>
    <property type="evidence" value="ECO:0000266"/>
    <property type="project" value="RGD"/>
</dbReference>
<dbReference type="GO" id="GO:1900159">
    <property type="term" value="P:positive regulation of bone mineralization involved in bone maturation"/>
    <property type="evidence" value="ECO:0000266"/>
    <property type="project" value="RGD"/>
</dbReference>
<dbReference type="GO" id="GO:0061036">
    <property type="term" value="P:positive regulation of cartilage development"/>
    <property type="evidence" value="ECO:0000266"/>
    <property type="project" value="RGD"/>
</dbReference>
<dbReference type="GO" id="GO:0030335">
    <property type="term" value="P:positive regulation of cell migration"/>
    <property type="evidence" value="ECO:0000266"/>
    <property type="project" value="RGD"/>
</dbReference>
<dbReference type="GO" id="GO:0008284">
    <property type="term" value="P:positive regulation of cell population proliferation"/>
    <property type="evidence" value="ECO:0000266"/>
    <property type="project" value="RGD"/>
</dbReference>
<dbReference type="GO" id="GO:0045893">
    <property type="term" value="P:positive regulation of DNA-templated transcription"/>
    <property type="evidence" value="ECO:0000266"/>
    <property type="project" value="RGD"/>
</dbReference>
<dbReference type="GO" id="GO:0030858">
    <property type="term" value="P:positive regulation of epithelial cell differentiation"/>
    <property type="evidence" value="ECO:0000266"/>
    <property type="project" value="RGD"/>
</dbReference>
<dbReference type="GO" id="GO:0010718">
    <property type="term" value="P:positive regulation of epithelial to mesenchymal transition"/>
    <property type="evidence" value="ECO:0000266"/>
    <property type="project" value="RGD"/>
</dbReference>
<dbReference type="GO" id="GO:0070374">
    <property type="term" value="P:positive regulation of ERK1 and ERK2 cascade"/>
    <property type="evidence" value="ECO:0000266"/>
    <property type="project" value="RGD"/>
</dbReference>
<dbReference type="GO" id="GO:0003331">
    <property type="term" value="P:positive regulation of extracellular matrix constituent secretion"/>
    <property type="evidence" value="ECO:0000266"/>
    <property type="project" value="RGD"/>
</dbReference>
<dbReference type="GO" id="GO:0045600">
    <property type="term" value="P:positive regulation of fat cell differentiation"/>
    <property type="evidence" value="ECO:0000266"/>
    <property type="project" value="RGD"/>
</dbReference>
<dbReference type="GO" id="GO:0010628">
    <property type="term" value="P:positive regulation of gene expression"/>
    <property type="evidence" value="ECO:0000266"/>
    <property type="project" value="RGD"/>
</dbReference>
<dbReference type="GO" id="GO:0043410">
    <property type="term" value="P:positive regulation of MAPK cascade"/>
    <property type="evidence" value="ECO:0000266"/>
    <property type="project" value="RGD"/>
</dbReference>
<dbReference type="GO" id="GO:1902895">
    <property type="term" value="P:positive regulation of miRNA transcription"/>
    <property type="evidence" value="ECO:0000266"/>
    <property type="project" value="RGD"/>
</dbReference>
<dbReference type="GO" id="GO:0050769">
    <property type="term" value="P:positive regulation of neurogenesis"/>
    <property type="evidence" value="ECO:0000314"/>
    <property type="project" value="MGI"/>
</dbReference>
<dbReference type="GO" id="GO:0045666">
    <property type="term" value="P:positive regulation of neuron differentiation"/>
    <property type="evidence" value="ECO:0000266"/>
    <property type="project" value="RGD"/>
</dbReference>
<dbReference type="GO" id="GO:1901331">
    <property type="term" value="P:positive regulation of odontoblast differentiation"/>
    <property type="evidence" value="ECO:0000250"/>
    <property type="project" value="UniProtKB"/>
</dbReference>
<dbReference type="GO" id="GO:0042482">
    <property type="term" value="P:positive regulation of odontogenesis"/>
    <property type="evidence" value="ECO:0000266"/>
    <property type="project" value="RGD"/>
</dbReference>
<dbReference type="GO" id="GO:0045778">
    <property type="term" value="P:positive regulation of ossification"/>
    <property type="evidence" value="ECO:0000266"/>
    <property type="project" value="RGD"/>
</dbReference>
<dbReference type="GO" id="GO:0045669">
    <property type="term" value="P:positive regulation of osteoblast differentiation"/>
    <property type="evidence" value="ECO:0000266"/>
    <property type="project" value="RGD"/>
</dbReference>
<dbReference type="GO" id="GO:0033690">
    <property type="term" value="P:positive regulation of osteoblast proliferation"/>
    <property type="evidence" value="ECO:0000266"/>
    <property type="project" value="RGD"/>
</dbReference>
<dbReference type="GO" id="GO:1900745">
    <property type="term" value="P:positive regulation of p38MAPK cascade"/>
    <property type="evidence" value="ECO:0000266"/>
    <property type="project" value="RGD"/>
</dbReference>
<dbReference type="GO" id="GO:0035360">
    <property type="term" value="P:positive regulation of peroxisome proliferator activated receptor signaling pathway"/>
    <property type="evidence" value="ECO:0000266"/>
    <property type="project" value="RGD"/>
</dbReference>
<dbReference type="GO" id="GO:0060391">
    <property type="term" value="P:positive regulation of SMAD protein signal transduction"/>
    <property type="evidence" value="ECO:0000266"/>
    <property type="project" value="RGD"/>
</dbReference>
<dbReference type="GO" id="GO:0045944">
    <property type="term" value="P:positive regulation of transcription by RNA polymerase II"/>
    <property type="evidence" value="ECO:0000314"/>
    <property type="project" value="MGI"/>
</dbReference>
<dbReference type="GO" id="GO:0030177">
    <property type="term" value="P:positive regulation of Wnt signaling pathway"/>
    <property type="evidence" value="ECO:0000266"/>
    <property type="project" value="RGD"/>
</dbReference>
<dbReference type="GO" id="GO:0031648">
    <property type="term" value="P:protein destabilization"/>
    <property type="evidence" value="ECO:0000266"/>
    <property type="project" value="RGD"/>
</dbReference>
<dbReference type="GO" id="GO:0006029">
    <property type="term" value="P:proteoglycan metabolic process"/>
    <property type="evidence" value="ECO:0000266"/>
    <property type="project" value="RGD"/>
</dbReference>
<dbReference type="GO" id="GO:0006355">
    <property type="term" value="P:regulation of DNA-templated transcription"/>
    <property type="evidence" value="ECO:0000266"/>
    <property type="project" value="RGD"/>
</dbReference>
<dbReference type="GO" id="GO:0042487">
    <property type="term" value="P:regulation of odontogenesis of dentin-containing tooth"/>
    <property type="evidence" value="ECO:0000266"/>
    <property type="project" value="RGD"/>
</dbReference>
<dbReference type="GO" id="GO:0009617">
    <property type="term" value="P:response to bacterium"/>
    <property type="evidence" value="ECO:0000266"/>
    <property type="project" value="RGD"/>
</dbReference>
<dbReference type="GO" id="GO:0001666">
    <property type="term" value="P:response to hypoxia"/>
    <property type="evidence" value="ECO:0000266"/>
    <property type="project" value="RGD"/>
</dbReference>
<dbReference type="GO" id="GO:0009612">
    <property type="term" value="P:response to mechanical stimulus"/>
    <property type="evidence" value="ECO:0000270"/>
    <property type="project" value="RGD"/>
</dbReference>
<dbReference type="GO" id="GO:0032526">
    <property type="term" value="P:response to retinoic acid"/>
    <property type="evidence" value="ECO:0000270"/>
    <property type="project" value="RGD"/>
</dbReference>
<dbReference type="GO" id="GO:0021537">
    <property type="term" value="P:telencephalon development"/>
    <property type="evidence" value="ECO:0000266"/>
    <property type="project" value="RGD"/>
</dbReference>
<dbReference type="GO" id="GO:0021978">
    <property type="term" value="P:telencephalon regionalization"/>
    <property type="evidence" value="ECO:0000266"/>
    <property type="project" value="RGD"/>
</dbReference>
<dbReference type="GO" id="GO:0060129">
    <property type="term" value="P:thyroid-stimulating hormone-secreting cell differentiation"/>
    <property type="evidence" value="ECO:0000266"/>
    <property type="project" value="RGD"/>
</dbReference>
<dbReference type="GO" id="GO:0006366">
    <property type="term" value="P:transcription by RNA polymerase II"/>
    <property type="evidence" value="ECO:0000266"/>
    <property type="project" value="RGD"/>
</dbReference>
<dbReference type="CDD" id="cd19390">
    <property type="entry name" value="TGF_beta_BMP2"/>
    <property type="match status" value="1"/>
</dbReference>
<dbReference type="FunFam" id="2.10.90.10:FF:000103">
    <property type="entry name" value="Bone morphogenetic protein 16"/>
    <property type="match status" value="1"/>
</dbReference>
<dbReference type="FunFam" id="2.60.120.970:FF:000009">
    <property type="entry name" value="bone morphogenetic protein 2"/>
    <property type="match status" value="1"/>
</dbReference>
<dbReference type="Gene3D" id="2.60.120.970">
    <property type="match status" value="1"/>
</dbReference>
<dbReference type="Gene3D" id="2.10.90.10">
    <property type="entry name" value="Cystine-knot cytokines"/>
    <property type="match status" value="1"/>
</dbReference>
<dbReference type="InterPro" id="IPR047953">
    <property type="entry name" value="BMP2_TGF_beta-like"/>
</dbReference>
<dbReference type="InterPro" id="IPR029034">
    <property type="entry name" value="Cystine-knot_cytokine"/>
</dbReference>
<dbReference type="InterPro" id="IPR001839">
    <property type="entry name" value="TGF-b_C"/>
</dbReference>
<dbReference type="InterPro" id="IPR001111">
    <property type="entry name" value="TGF-b_propeptide"/>
</dbReference>
<dbReference type="InterPro" id="IPR015615">
    <property type="entry name" value="TGF-beta-rel"/>
</dbReference>
<dbReference type="InterPro" id="IPR017948">
    <property type="entry name" value="TGFb_CS"/>
</dbReference>
<dbReference type="PANTHER" id="PTHR11848:SF143">
    <property type="entry name" value="BONE MORPHOGENETIC PROTEIN 2"/>
    <property type="match status" value="1"/>
</dbReference>
<dbReference type="PANTHER" id="PTHR11848">
    <property type="entry name" value="TGF-BETA FAMILY"/>
    <property type="match status" value="1"/>
</dbReference>
<dbReference type="Pfam" id="PF00019">
    <property type="entry name" value="TGF_beta"/>
    <property type="match status" value="1"/>
</dbReference>
<dbReference type="Pfam" id="PF00688">
    <property type="entry name" value="TGFb_propeptide"/>
    <property type="match status" value="1"/>
</dbReference>
<dbReference type="PRINTS" id="PR00669">
    <property type="entry name" value="INHIBINA"/>
</dbReference>
<dbReference type="SMART" id="SM00204">
    <property type="entry name" value="TGFB"/>
    <property type="match status" value="1"/>
</dbReference>
<dbReference type="SUPFAM" id="SSF57501">
    <property type="entry name" value="Cystine-knot cytokines"/>
    <property type="match status" value="1"/>
</dbReference>
<dbReference type="PROSITE" id="PS00250">
    <property type="entry name" value="TGF_BETA_1"/>
    <property type="match status" value="1"/>
</dbReference>
<dbReference type="PROSITE" id="PS51362">
    <property type="entry name" value="TGF_BETA_2"/>
    <property type="match status" value="1"/>
</dbReference>
<comment type="function">
    <text evidence="2 4">Growth factor of the TGF-beta superfamily that plays essential roles in many developmental processes, including cardiogenesis, neurogenesis, and osteogenesis. Induces cartilage and bone formation. Initiates the canonical BMP signaling cascade by associating with type I receptor BMPR1A and type II receptor BMPR2. Once all three components are bound together in a complex at the cell surface, BMPR2 phosphorylates and activates BMPR1A. In turn, BMPR1A propagates signal by phosphorylating SMAD1/5/8 that travel to the nucleus and act as activators and repressors of transcription of target genes. Also acts to promote expression of HAMP, via the interaction with its receptor BMPR1A/ALK3 (By similarity). Can also signal through non-canonical pathways such as ERK/MAP kinase signaling cascade that regulates osteoblast differentiation. Also stimulates the differentiation of myoblasts into osteoblasts via the EIF2AK3-EIF2A-ATF4 pathway by stimulating EIF2A phosphorylation which leads to increased expression of ATF4 which plays a central role in osteoblast differentiation. Acts as a positive regulator of odontoblast differentiation during mesenchymal tooth germ formation, expression is repressed during the bell stage by MSX1-mediated inhibition of CTNNB1 signaling (By similarity).</text>
</comment>
<comment type="subunit">
    <text evidence="2 4">Homodimer; disulfide-linked. Interacts with SOSTDC1 (By similarity). Interacts with GREM2, RGMA, RGMB and RGMC. Interacts with ASPN (By similarity). Interacts with MAFP5 (By similarity). Interacts with FBN1 (via N-terminal domain) and FBN2. Interacts with type I receptor BMPR1A. Interacts with type II receptor BMPR2 (By similarity). Interacts with SCUBE3 (By similarity). Interacts with TNFAIP6 (primarily via Link domain); this interaction is inhibited by hyaluronan. Interacts with ERFE (By similarity). Interacts with BMPR1A/ALK3; the interaction may induce HAMP expression (By similarity). Forms heterodimers with BMP6 in vitro; the heterodimer then binds to its receptor BMPR1A /ALK3 and may induce HAMP expression (By similarity). Interacts with TGFBR3 (By similarity).</text>
</comment>
<comment type="subcellular location">
    <subcellularLocation>
        <location evidence="1">Secreted</location>
    </subcellularLocation>
</comment>
<comment type="tissue specificity">
    <text>Expressed in femur, calvaria, trachea, lung and ovary.</text>
</comment>
<comment type="similarity">
    <text evidence="7">Belongs to the TGF-beta family.</text>
</comment>
<accession>P49001</accession>
<protein>
    <recommendedName>
        <fullName>Bone morphogenetic protein 2</fullName>
        <shortName>BMP-2</shortName>
    </recommendedName>
    <alternativeName>
        <fullName>Bone morphogenetic protein 2A</fullName>
        <shortName>BMP-2A</shortName>
    </alternativeName>
</protein>
<sequence length="393" mass="44383">MVAGTRCLLVLLLPQVLLGGAAGLIPELGRKKFAGASRPLSRPSEDVLSEFELRLLSMFGLKQRPTPSKDVVVPPYMLDLYRRHSGQPGALAPDHRLERAASRANTVLSFHHEEAIEELSEMSGKTSRRFFFNLSSVPTDEFLTSAELQIFREQMQEALGNSSFQHRINIYEIIKPATASSKFPVTRLLDTRLVTQNTSQWESFDVTPAVMRWTAQGHTNHGFVVEVAHLEEKPGVSKRHVRISRSLHQDEHSWSQVRPLLVTFGHDGKGHPLHKREKRQAKHKQRKRLKSSCKRHPLYVDFSDVGWNDWIVAPPGYHAFYCHGECPFPLADHLNSTNHAIVQTLVNSVNSKIPKACCVPTELSAISMLYLDENEKVVLKNYQDMVVEGCGCR</sequence>
<reference key="1">
    <citation type="submission" date="1993-09" db="EMBL/GenBank/DDBJ databases">
        <authorList>
            <person name="Feng J.Q."/>
            <person name="Chen D."/>
            <person name="Feng M."/>
            <person name="Harris M.A."/>
            <person name="Mundy G.R."/>
            <person name="Harris S.E."/>
        </authorList>
    </citation>
    <scope>NUCLEOTIDE SEQUENCE [MRNA]</scope>
    <source>
        <tissue>Bone</tissue>
    </source>
</reference>
<evidence type="ECO:0000250" key="1"/>
<evidence type="ECO:0000250" key="2">
    <source>
        <dbReference type="UniProtKB" id="P12643"/>
    </source>
</evidence>
<evidence type="ECO:0000250" key="3">
    <source>
        <dbReference type="UniProtKB" id="P12644"/>
    </source>
</evidence>
<evidence type="ECO:0000250" key="4">
    <source>
        <dbReference type="UniProtKB" id="P21274"/>
    </source>
</evidence>
<evidence type="ECO:0000255" key="5"/>
<evidence type="ECO:0000256" key="6">
    <source>
        <dbReference type="SAM" id="MobiDB-lite"/>
    </source>
</evidence>
<evidence type="ECO:0000305" key="7"/>